<keyword id="KW-0963">Cytoplasm</keyword>
<keyword id="KW-1185">Reference proteome</keyword>
<keyword id="KW-0690">Ribosome biogenesis</keyword>
<sequence>MTMPTKSFHRTDRVSAQVRRDLGTIVHAAVRDHGLPSVSVSDVEISRDLAHAKVFVTALQQERSAEAVKGLKEIAGQLRTQLARAMKLRHVPELHFHYDDSVDRGERIDNLLRDLDDIGPEAAPDAQDAEPR</sequence>
<gene>
    <name evidence="1" type="primary">rbfA</name>
    <name type="ordered locus">XCC2510</name>
</gene>
<proteinExistence type="inferred from homology"/>
<comment type="function">
    <text evidence="1">One of several proteins that assist in the late maturation steps of the functional core of the 30S ribosomal subunit. Associates with free 30S ribosomal subunits (but not with 30S subunits that are part of 70S ribosomes or polysomes). Required for efficient processing of 16S rRNA. May interact with the 5'-terminal helix region of 16S rRNA.</text>
</comment>
<comment type="subunit">
    <text evidence="1">Monomer. Binds 30S ribosomal subunits, but not 50S ribosomal subunits or 70S ribosomes.</text>
</comment>
<comment type="subcellular location">
    <subcellularLocation>
        <location evidence="1">Cytoplasm</location>
    </subcellularLocation>
</comment>
<comment type="similarity">
    <text evidence="1">Belongs to the RbfA family.</text>
</comment>
<reference key="1">
    <citation type="journal article" date="2002" name="Nature">
        <title>Comparison of the genomes of two Xanthomonas pathogens with differing host specificities.</title>
        <authorList>
            <person name="da Silva A.C.R."/>
            <person name="Ferro J.A."/>
            <person name="Reinach F.C."/>
            <person name="Farah C.S."/>
            <person name="Furlan L.R."/>
            <person name="Quaggio R.B."/>
            <person name="Monteiro-Vitorello C.B."/>
            <person name="Van Sluys M.A."/>
            <person name="Almeida N.F. Jr."/>
            <person name="Alves L.M.C."/>
            <person name="do Amaral A.M."/>
            <person name="Bertolini M.C."/>
            <person name="Camargo L.E.A."/>
            <person name="Camarotte G."/>
            <person name="Cannavan F."/>
            <person name="Cardozo J."/>
            <person name="Chambergo F."/>
            <person name="Ciapina L.P."/>
            <person name="Cicarelli R.M.B."/>
            <person name="Coutinho L.L."/>
            <person name="Cursino-Santos J.R."/>
            <person name="El-Dorry H."/>
            <person name="Faria J.B."/>
            <person name="Ferreira A.J.S."/>
            <person name="Ferreira R.C.C."/>
            <person name="Ferro M.I.T."/>
            <person name="Formighieri E.F."/>
            <person name="Franco M.C."/>
            <person name="Greggio C.C."/>
            <person name="Gruber A."/>
            <person name="Katsuyama A.M."/>
            <person name="Kishi L.T."/>
            <person name="Leite R.P."/>
            <person name="Lemos E.G.M."/>
            <person name="Lemos M.V.F."/>
            <person name="Locali E.C."/>
            <person name="Machado M.A."/>
            <person name="Madeira A.M.B.N."/>
            <person name="Martinez-Rossi N.M."/>
            <person name="Martins E.C."/>
            <person name="Meidanis J."/>
            <person name="Menck C.F.M."/>
            <person name="Miyaki C.Y."/>
            <person name="Moon D.H."/>
            <person name="Moreira L.M."/>
            <person name="Novo M.T.M."/>
            <person name="Okura V.K."/>
            <person name="Oliveira M.C."/>
            <person name="Oliveira V.R."/>
            <person name="Pereira H.A."/>
            <person name="Rossi A."/>
            <person name="Sena J.A.D."/>
            <person name="Silva C."/>
            <person name="de Souza R.F."/>
            <person name="Spinola L.A.F."/>
            <person name="Takita M.A."/>
            <person name="Tamura R.E."/>
            <person name="Teixeira E.C."/>
            <person name="Tezza R.I.D."/>
            <person name="Trindade dos Santos M."/>
            <person name="Truffi D."/>
            <person name="Tsai S.M."/>
            <person name="White F.F."/>
            <person name="Setubal J.C."/>
            <person name="Kitajima J.P."/>
        </authorList>
    </citation>
    <scope>NUCLEOTIDE SEQUENCE [LARGE SCALE GENOMIC DNA]</scope>
    <source>
        <strain>ATCC 33913 / DSM 3586 / NCPPB 528 / LMG 568 / P 25</strain>
    </source>
</reference>
<dbReference type="EMBL" id="AE008922">
    <property type="protein sequence ID" value="AAM41784.1"/>
    <property type="molecule type" value="Genomic_DNA"/>
</dbReference>
<dbReference type="RefSeq" id="NP_637860.1">
    <property type="nucleotide sequence ID" value="NC_003902.1"/>
</dbReference>
<dbReference type="SMR" id="Q8P7U8"/>
<dbReference type="STRING" id="190485.XCC2510"/>
<dbReference type="EnsemblBacteria" id="AAM41784">
    <property type="protein sequence ID" value="AAM41784"/>
    <property type="gene ID" value="XCC2510"/>
</dbReference>
<dbReference type="KEGG" id="xcc:XCC2510"/>
<dbReference type="PATRIC" id="fig|190485.4.peg.2677"/>
<dbReference type="eggNOG" id="COG0858">
    <property type="taxonomic scope" value="Bacteria"/>
</dbReference>
<dbReference type="HOGENOM" id="CLU_089475_6_3_6"/>
<dbReference type="OrthoDB" id="307788at2"/>
<dbReference type="Proteomes" id="UP000001010">
    <property type="component" value="Chromosome"/>
</dbReference>
<dbReference type="GO" id="GO:0005829">
    <property type="term" value="C:cytosol"/>
    <property type="evidence" value="ECO:0000318"/>
    <property type="project" value="GO_Central"/>
</dbReference>
<dbReference type="GO" id="GO:0043024">
    <property type="term" value="F:ribosomal small subunit binding"/>
    <property type="evidence" value="ECO:0000318"/>
    <property type="project" value="GO_Central"/>
</dbReference>
<dbReference type="GO" id="GO:0030490">
    <property type="term" value="P:maturation of SSU-rRNA"/>
    <property type="evidence" value="ECO:0007669"/>
    <property type="project" value="UniProtKB-UniRule"/>
</dbReference>
<dbReference type="GO" id="GO:0042254">
    <property type="term" value="P:ribosome biogenesis"/>
    <property type="evidence" value="ECO:0000318"/>
    <property type="project" value="GO_Central"/>
</dbReference>
<dbReference type="FunFam" id="3.30.300.20:FF:000022">
    <property type="entry name" value="Ribosome-binding factor A"/>
    <property type="match status" value="1"/>
</dbReference>
<dbReference type="Gene3D" id="3.30.300.20">
    <property type="match status" value="1"/>
</dbReference>
<dbReference type="HAMAP" id="MF_00003">
    <property type="entry name" value="RbfA"/>
    <property type="match status" value="1"/>
</dbReference>
<dbReference type="InterPro" id="IPR015946">
    <property type="entry name" value="KH_dom-like_a/b"/>
</dbReference>
<dbReference type="InterPro" id="IPR000238">
    <property type="entry name" value="RbfA"/>
</dbReference>
<dbReference type="InterPro" id="IPR023799">
    <property type="entry name" value="RbfA_dom_sf"/>
</dbReference>
<dbReference type="InterPro" id="IPR020053">
    <property type="entry name" value="Ribosome-bd_factorA_CS"/>
</dbReference>
<dbReference type="NCBIfam" id="TIGR00082">
    <property type="entry name" value="rbfA"/>
    <property type="match status" value="1"/>
</dbReference>
<dbReference type="PANTHER" id="PTHR33515">
    <property type="entry name" value="RIBOSOME-BINDING FACTOR A, CHLOROPLASTIC-RELATED"/>
    <property type="match status" value="1"/>
</dbReference>
<dbReference type="PANTHER" id="PTHR33515:SF1">
    <property type="entry name" value="RIBOSOME-BINDING FACTOR A, CHLOROPLASTIC-RELATED"/>
    <property type="match status" value="1"/>
</dbReference>
<dbReference type="Pfam" id="PF02033">
    <property type="entry name" value="RBFA"/>
    <property type="match status" value="1"/>
</dbReference>
<dbReference type="SUPFAM" id="SSF89919">
    <property type="entry name" value="Ribosome-binding factor A, RbfA"/>
    <property type="match status" value="1"/>
</dbReference>
<dbReference type="PROSITE" id="PS01319">
    <property type="entry name" value="RBFA"/>
    <property type="match status" value="1"/>
</dbReference>
<name>RBFA_XANCP</name>
<organism>
    <name type="scientific">Xanthomonas campestris pv. campestris (strain ATCC 33913 / DSM 3586 / NCPPB 528 / LMG 568 / P 25)</name>
    <dbReference type="NCBI Taxonomy" id="190485"/>
    <lineage>
        <taxon>Bacteria</taxon>
        <taxon>Pseudomonadati</taxon>
        <taxon>Pseudomonadota</taxon>
        <taxon>Gammaproteobacteria</taxon>
        <taxon>Lysobacterales</taxon>
        <taxon>Lysobacteraceae</taxon>
        <taxon>Xanthomonas</taxon>
    </lineage>
</organism>
<protein>
    <recommendedName>
        <fullName evidence="1">Ribosome-binding factor A</fullName>
    </recommendedName>
</protein>
<evidence type="ECO:0000255" key="1">
    <source>
        <dbReference type="HAMAP-Rule" id="MF_00003"/>
    </source>
</evidence>
<accession>Q8P7U8</accession>
<feature type="chain" id="PRO_0000102773" description="Ribosome-binding factor A">
    <location>
        <begin position="1"/>
        <end position="132"/>
    </location>
</feature>